<keyword id="KW-0131">Cell cycle</keyword>
<keyword id="KW-0132">Cell division</keyword>
<keyword id="KW-0159">Chromosome partition</keyword>
<keyword id="KW-0963">Cytoplasm</keyword>
<accession>P0DF65</accession>
<accession>P60222</accession>
<accession>Q9A1B1</accession>
<reference key="1">
    <citation type="journal article" date="2003" name="Genome Res.">
        <title>Genome sequence of an M3 strain of Streptococcus pyogenes reveals a large-scale genomic rearrangement in invasive strains and new insights into phage evolution.</title>
        <authorList>
            <person name="Nakagawa I."/>
            <person name="Kurokawa K."/>
            <person name="Yamashita A."/>
            <person name="Nakata M."/>
            <person name="Tomiyasu Y."/>
            <person name="Okahashi N."/>
            <person name="Kawabata S."/>
            <person name="Yamazaki K."/>
            <person name="Shiba T."/>
            <person name="Yasunaga T."/>
            <person name="Hayashi H."/>
            <person name="Hattori M."/>
            <person name="Hamada S."/>
        </authorList>
    </citation>
    <scope>NUCLEOTIDE SEQUENCE [LARGE SCALE GENOMIC DNA]</scope>
    <source>
        <strain>SSI-1</strain>
    </source>
</reference>
<dbReference type="EMBL" id="BA000034">
    <property type="protein sequence ID" value="BAC64686.1"/>
    <property type="molecule type" value="Genomic_DNA"/>
</dbReference>
<dbReference type="RefSeq" id="WP_002985894.1">
    <property type="nucleotide sequence ID" value="NC_004606.1"/>
</dbReference>
<dbReference type="SMR" id="P0DF65"/>
<dbReference type="GeneID" id="69901359"/>
<dbReference type="KEGG" id="sps:SPs1591"/>
<dbReference type="HOGENOM" id="CLU_045647_5_3_9"/>
<dbReference type="GO" id="GO:0005737">
    <property type="term" value="C:cytoplasm"/>
    <property type="evidence" value="ECO:0007669"/>
    <property type="project" value="UniProtKB-SubCell"/>
</dbReference>
<dbReference type="GO" id="GO:0051301">
    <property type="term" value="P:cell division"/>
    <property type="evidence" value="ECO:0007669"/>
    <property type="project" value="UniProtKB-KW"/>
</dbReference>
<dbReference type="GO" id="GO:0051304">
    <property type="term" value="P:chromosome separation"/>
    <property type="evidence" value="ECO:0007669"/>
    <property type="project" value="InterPro"/>
</dbReference>
<dbReference type="GO" id="GO:0006260">
    <property type="term" value="P:DNA replication"/>
    <property type="evidence" value="ECO:0007669"/>
    <property type="project" value="UniProtKB-UniRule"/>
</dbReference>
<dbReference type="Gene3D" id="1.10.10.10">
    <property type="entry name" value="Winged helix-like DNA-binding domain superfamily/Winged helix DNA-binding domain"/>
    <property type="match status" value="2"/>
</dbReference>
<dbReference type="HAMAP" id="MF_01804">
    <property type="entry name" value="ScpB"/>
    <property type="match status" value="1"/>
</dbReference>
<dbReference type="InterPro" id="IPR005234">
    <property type="entry name" value="ScpB_csome_segregation"/>
</dbReference>
<dbReference type="InterPro" id="IPR036388">
    <property type="entry name" value="WH-like_DNA-bd_sf"/>
</dbReference>
<dbReference type="InterPro" id="IPR036390">
    <property type="entry name" value="WH_DNA-bd_sf"/>
</dbReference>
<dbReference type="NCBIfam" id="TIGR00281">
    <property type="entry name" value="SMC-Scp complex subunit ScpB"/>
    <property type="match status" value="1"/>
</dbReference>
<dbReference type="PANTHER" id="PTHR34298">
    <property type="entry name" value="SEGREGATION AND CONDENSATION PROTEIN B"/>
    <property type="match status" value="1"/>
</dbReference>
<dbReference type="PANTHER" id="PTHR34298:SF2">
    <property type="entry name" value="SEGREGATION AND CONDENSATION PROTEIN B"/>
    <property type="match status" value="1"/>
</dbReference>
<dbReference type="Pfam" id="PF04079">
    <property type="entry name" value="SMC_ScpB"/>
    <property type="match status" value="1"/>
</dbReference>
<dbReference type="PIRSF" id="PIRSF019345">
    <property type="entry name" value="ScpB"/>
    <property type="match status" value="1"/>
</dbReference>
<dbReference type="SUPFAM" id="SSF46785">
    <property type="entry name" value="Winged helix' DNA-binding domain"/>
    <property type="match status" value="2"/>
</dbReference>
<feature type="chain" id="PRO_0000411572" description="Segregation and condensation protein B">
    <location>
        <begin position="1"/>
        <end position="183"/>
    </location>
</feature>
<proteinExistence type="inferred from homology"/>
<gene>
    <name evidence="1" type="primary">scpB</name>
    <name type="ordered locus">SPs1591</name>
</gene>
<evidence type="ECO:0000255" key="1">
    <source>
        <dbReference type="HAMAP-Rule" id="MF_01804"/>
    </source>
</evidence>
<protein>
    <recommendedName>
        <fullName evidence="1">Segregation and condensation protein B</fullName>
    </recommendedName>
</protein>
<sequence length="183" mass="20495">MTYLSQIEALLFVAGEEGLSLRHLASMLSLTPTALQQQLEKLSQKYEKDQHSSLCLIETANTYRLVTKEGFAELLRAYAKTPMNQSLSRASLEVLSIVAYKQPITRIEIDDIRGVNSSGALSKLLAFDLIREAGKKDVVGRPHLYATTDYFLDYMGINHLDELIEVSAVEPADEEIALFRTQD</sequence>
<comment type="function">
    <text evidence="1">Participates in chromosomal partition during cell division. May act via the formation of a condensin-like complex containing Smc and ScpA that pull DNA away from mid-cell into both cell halves.</text>
</comment>
<comment type="subunit">
    <text evidence="1">Homodimer. Homodimerization may be required to stabilize the binding of ScpA to the Smc head domains. Component of a cohesin-like complex composed of ScpA, ScpB and the Smc homodimer, in which ScpA and ScpB bind to the head domain of Smc. The presence of the three proteins is required for the association of the complex with DNA.</text>
</comment>
<comment type="subcellular location">
    <subcellularLocation>
        <location evidence="1">Cytoplasm</location>
    </subcellularLocation>
    <text evidence="1">Associated with two foci at the outer edges of the nucleoid region in young cells, and at four foci within both cell halves in older cells.</text>
</comment>
<comment type="similarity">
    <text evidence="1">Belongs to the ScpB family.</text>
</comment>
<organism>
    <name type="scientific">Streptococcus pyogenes serotype M3 (strain SSI-1)</name>
    <dbReference type="NCBI Taxonomy" id="193567"/>
    <lineage>
        <taxon>Bacteria</taxon>
        <taxon>Bacillati</taxon>
        <taxon>Bacillota</taxon>
        <taxon>Bacilli</taxon>
        <taxon>Lactobacillales</taxon>
        <taxon>Streptococcaceae</taxon>
        <taxon>Streptococcus</taxon>
    </lineage>
</organism>
<name>SCPB_STRPQ</name>